<name>KRA92_PANTR</name>
<dbReference type="EMBL" id="AB222173">
    <property type="protein sequence ID" value="BAF62418.1"/>
    <property type="molecule type" value="mRNA"/>
</dbReference>
<dbReference type="RefSeq" id="NP_001182081.1">
    <property type="nucleotide sequence ID" value="NM_001195152.1"/>
</dbReference>
<dbReference type="STRING" id="9598.ENSPTRP00000089277"/>
<dbReference type="PaxDb" id="9598-ENSPTRP00000059047"/>
<dbReference type="Ensembl" id="ENSPTRT00000106231.1">
    <property type="protein sequence ID" value="ENSPTRP00000089277.1"/>
    <property type="gene ID" value="ENSPTRG00000044531.1"/>
</dbReference>
<dbReference type="GeneID" id="742702"/>
<dbReference type="KEGG" id="ptr:742702"/>
<dbReference type="CTD" id="83899"/>
<dbReference type="eggNOG" id="KOG4726">
    <property type="taxonomic scope" value="Eukaryota"/>
</dbReference>
<dbReference type="GeneTree" id="ENSGT00940000156135"/>
<dbReference type="InParanoid" id="A5A6P5"/>
<dbReference type="OMA" id="NTSCRNT"/>
<dbReference type="Proteomes" id="UP000002277">
    <property type="component" value="Chromosome 17"/>
</dbReference>
<dbReference type="GO" id="GO:0005829">
    <property type="term" value="C:cytosol"/>
    <property type="evidence" value="ECO:0007669"/>
    <property type="project" value="UniProtKB-ARBA"/>
</dbReference>
<dbReference type="GO" id="GO:0045095">
    <property type="term" value="C:keratin filament"/>
    <property type="evidence" value="ECO:0007669"/>
    <property type="project" value="InterPro"/>
</dbReference>
<dbReference type="GO" id="GO:0042802">
    <property type="term" value="F:identical protein binding"/>
    <property type="evidence" value="ECO:0007669"/>
    <property type="project" value="Ensembl"/>
</dbReference>
<dbReference type="InterPro" id="IPR002494">
    <property type="entry name" value="KAP"/>
</dbReference>
<dbReference type="Pfam" id="PF13885">
    <property type="entry name" value="Keratin_B2_2"/>
    <property type="match status" value="3"/>
</dbReference>
<evidence type="ECO:0000250" key="1"/>
<evidence type="ECO:0000305" key="2"/>
<accession>A5A6P5</accession>
<gene>
    <name type="primary">KRTAP9-2</name>
</gene>
<feature type="chain" id="PRO_0000296677" description="Keratin-associated protein 9-2">
    <location>
        <begin position="1"/>
        <end position="170"/>
    </location>
</feature>
<feature type="repeat" description="1">
    <location>
        <begin position="8"/>
        <end position="12"/>
    </location>
</feature>
<feature type="repeat" description="2">
    <location>
        <begin position="13"/>
        <end position="17"/>
    </location>
</feature>
<feature type="repeat" description="3">
    <location>
        <begin position="18"/>
        <end position="22"/>
    </location>
</feature>
<feature type="repeat" description="4">
    <location>
        <begin position="37"/>
        <end position="41"/>
    </location>
</feature>
<feature type="repeat" description="5">
    <location>
        <begin position="42"/>
        <end position="46"/>
    </location>
</feature>
<feature type="repeat" description="6">
    <location>
        <begin position="51"/>
        <end position="55"/>
    </location>
</feature>
<feature type="repeat" description="7">
    <location>
        <begin position="61"/>
        <end position="65"/>
    </location>
</feature>
<feature type="repeat" description="8">
    <location>
        <begin position="66"/>
        <end position="70"/>
    </location>
</feature>
<feature type="repeat" description="9">
    <location>
        <begin position="75"/>
        <end position="79"/>
    </location>
</feature>
<feature type="repeat" description="10">
    <location>
        <begin position="80"/>
        <end position="84"/>
    </location>
</feature>
<feature type="repeat" description="11">
    <location>
        <begin position="85"/>
        <end position="89"/>
    </location>
</feature>
<feature type="repeat" description="12">
    <location>
        <begin position="90"/>
        <end position="94"/>
    </location>
</feature>
<feature type="repeat" description="13">
    <location>
        <begin position="95"/>
        <end position="99"/>
    </location>
</feature>
<feature type="repeat" description="14">
    <location>
        <begin position="140"/>
        <end position="144"/>
    </location>
</feature>
<feature type="repeat" description="15">
    <location>
        <begin position="145"/>
        <end position="149"/>
    </location>
</feature>
<feature type="repeat" description="16">
    <location>
        <begin position="150"/>
        <end position="154"/>
    </location>
</feature>
<feature type="repeat" description="17">
    <location>
        <begin position="164"/>
        <end position="168"/>
    </location>
</feature>
<feature type="region of interest" description="17 X 5 AA repeats of C-C-[RQVSGE]-[SPTQ]-[TASP]">
    <location>
        <begin position="8"/>
        <end position="168"/>
    </location>
</feature>
<protein>
    <recommendedName>
        <fullName>Keratin-associated protein 9-2</fullName>
    </recommendedName>
    <alternativeName>
        <fullName>Keratin-associated protein 9.2</fullName>
    </alternativeName>
</protein>
<organism>
    <name type="scientific">Pan troglodytes</name>
    <name type="common">Chimpanzee</name>
    <dbReference type="NCBI Taxonomy" id="9598"/>
    <lineage>
        <taxon>Eukaryota</taxon>
        <taxon>Metazoa</taxon>
        <taxon>Chordata</taxon>
        <taxon>Craniata</taxon>
        <taxon>Vertebrata</taxon>
        <taxon>Euteleostomi</taxon>
        <taxon>Mammalia</taxon>
        <taxon>Eutheria</taxon>
        <taxon>Euarchontoglires</taxon>
        <taxon>Primates</taxon>
        <taxon>Haplorrhini</taxon>
        <taxon>Catarrhini</taxon>
        <taxon>Hominidae</taxon>
        <taxon>Pan</taxon>
    </lineage>
</organism>
<comment type="function">
    <text evidence="1">In the hair cortex, hair keratin intermediate filaments are embedded in an interfilamentous matrix, consisting of hair keratin-associated proteins (KRTAP), which are essential for the formation of a rigid and resistant hair shaft through their extensive disulfide bond cross-linking with abundant cysteine residues of hair keratins. The matrix proteins include the high-sulfur and high-glycine-tyrosine keratins (By similarity).</text>
</comment>
<comment type="subunit">
    <text evidence="1">Interacts with hair keratins.</text>
</comment>
<comment type="similarity">
    <text evidence="2">Belongs to the KRTAP type 9 family.</text>
</comment>
<keyword id="KW-0416">Keratin</keyword>
<keyword id="KW-1185">Reference proteome</keyword>
<keyword id="KW-0677">Repeat</keyword>
<sequence length="170" mass="17987">MTHCCSPCCQPTCCRTTCCRTTCWKPTTVTTCSSTPCCQPTCCVSSCCQPCCCPTCCQNTCCRTTCCQPTCVTSCYQPSCCSTPCCQPTCCGSSCCGQTSCGQSSSCTPVYCRRTCYYPTNVCLPGCLNQSCGSSCCQPCCHPACCETTCCRTTCFQPTCVSSCCQPSCC</sequence>
<reference key="1">
    <citation type="journal article" date="2007" name="Gene">
        <title>Mapping of chimpanzee full-length cDNAs onto the human genome unveils large potential divergence of the transcriptome.</title>
        <authorList>
            <person name="Sakate R."/>
            <person name="Suto Y."/>
            <person name="Imanishi T."/>
            <person name="Tanoue T."/>
            <person name="Hida M."/>
            <person name="Hayasaka I."/>
            <person name="Kusuda J."/>
            <person name="Gojobori T."/>
            <person name="Hashimoto K."/>
            <person name="Hirai M."/>
        </authorList>
    </citation>
    <scope>NUCLEOTIDE SEQUENCE [MRNA]</scope>
    <source>
        <tissue>Skin</tissue>
    </source>
</reference>
<proteinExistence type="evidence at transcript level"/>